<proteinExistence type="inferred from homology"/>
<reference key="1">
    <citation type="journal article" date="2008" name="J. Bacteriol.">
        <title>Complete genome sequence of uropathogenic Proteus mirabilis, a master of both adherence and motility.</title>
        <authorList>
            <person name="Pearson M.M."/>
            <person name="Sebaihia M."/>
            <person name="Churcher C."/>
            <person name="Quail M.A."/>
            <person name="Seshasayee A.S."/>
            <person name="Luscombe N.M."/>
            <person name="Abdellah Z."/>
            <person name="Arrosmith C."/>
            <person name="Atkin B."/>
            <person name="Chillingworth T."/>
            <person name="Hauser H."/>
            <person name="Jagels K."/>
            <person name="Moule S."/>
            <person name="Mungall K."/>
            <person name="Norbertczak H."/>
            <person name="Rabbinowitsch E."/>
            <person name="Walker D."/>
            <person name="Whithead S."/>
            <person name="Thomson N.R."/>
            <person name="Rather P.N."/>
            <person name="Parkhill J."/>
            <person name="Mobley H.L.T."/>
        </authorList>
    </citation>
    <scope>NUCLEOTIDE SEQUENCE [LARGE SCALE GENOMIC DNA]</scope>
    <source>
        <strain>HI4320</strain>
    </source>
</reference>
<dbReference type="EC" id="6.1.1.15" evidence="1"/>
<dbReference type="EMBL" id="AM942759">
    <property type="protein sequence ID" value="CAR44486.1"/>
    <property type="molecule type" value="Genomic_DNA"/>
</dbReference>
<dbReference type="RefSeq" id="WP_004245451.1">
    <property type="nucleotide sequence ID" value="NC_010554.1"/>
</dbReference>
<dbReference type="SMR" id="B4F249"/>
<dbReference type="EnsemblBacteria" id="CAR44486">
    <property type="protein sequence ID" value="CAR44486"/>
    <property type="gene ID" value="PMI2264"/>
</dbReference>
<dbReference type="GeneID" id="6802021"/>
<dbReference type="KEGG" id="pmr:PMI2264"/>
<dbReference type="eggNOG" id="COG0442">
    <property type="taxonomic scope" value="Bacteria"/>
</dbReference>
<dbReference type="HOGENOM" id="CLU_016739_0_0_6"/>
<dbReference type="Proteomes" id="UP000008319">
    <property type="component" value="Chromosome"/>
</dbReference>
<dbReference type="GO" id="GO:0005829">
    <property type="term" value="C:cytosol"/>
    <property type="evidence" value="ECO:0007669"/>
    <property type="project" value="TreeGrafter"/>
</dbReference>
<dbReference type="GO" id="GO:0002161">
    <property type="term" value="F:aminoacyl-tRNA deacylase activity"/>
    <property type="evidence" value="ECO:0007669"/>
    <property type="project" value="InterPro"/>
</dbReference>
<dbReference type="GO" id="GO:0005524">
    <property type="term" value="F:ATP binding"/>
    <property type="evidence" value="ECO:0007669"/>
    <property type="project" value="UniProtKB-UniRule"/>
</dbReference>
<dbReference type="GO" id="GO:0004827">
    <property type="term" value="F:proline-tRNA ligase activity"/>
    <property type="evidence" value="ECO:0007669"/>
    <property type="project" value="UniProtKB-UniRule"/>
</dbReference>
<dbReference type="GO" id="GO:0006433">
    <property type="term" value="P:prolyl-tRNA aminoacylation"/>
    <property type="evidence" value="ECO:0007669"/>
    <property type="project" value="UniProtKB-UniRule"/>
</dbReference>
<dbReference type="CDD" id="cd04334">
    <property type="entry name" value="ProRS-INS"/>
    <property type="match status" value="1"/>
</dbReference>
<dbReference type="CDD" id="cd00861">
    <property type="entry name" value="ProRS_anticodon_short"/>
    <property type="match status" value="1"/>
</dbReference>
<dbReference type="CDD" id="cd00779">
    <property type="entry name" value="ProRS_core_prok"/>
    <property type="match status" value="1"/>
</dbReference>
<dbReference type="FunFam" id="3.30.930.10:FF:000043">
    <property type="entry name" value="Proline--tRNA ligase"/>
    <property type="match status" value="1"/>
</dbReference>
<dbReference type="FunFam" id="3.30.930.10:FF:000097">
    <property type="entry name" value="Proline--tRNA ligase"/>
    <property type="match status" value="1"/>
</dbReference>
<dbReference type="FunFam" id="3.40.50.800:FF:000006">
    <property type="entry name" value="Proline--tRNA ligase"/>
    <property type="match status" value="1"/>
</dbReference>
<dbReference type="Gene3D" id="3.40.50.800">
    <property type="entry name" value="Anticodon-binding domain"/>
    <property type="match status" value="1"/>
</dbReference>
<dbReference type="Gene3D" id="3.30.930.10">
    <property type="entry name" value="Bira Bifunctional Protein, Domain 2"/>
    <property type="match status" value="2"/>
</dbReference>
<dbReference type="HAMAP" id="MF_01569">
    <property type="entry name" value="Pro_tRNA_synth_type1"/>
    <property type="match status" value="1"/>
</dbReference>
<dbReference type="InterPro" id="IPR002314">
    <property type="entry name" value="aa-tRNA-synt_IIb"/>
</dbReference>
<dbReference type="InterPro" id="IPR006195">
    <property type="entry name" value="aa-tRNA-synth_II"/>
</dbReference>
<dbReference type="InterPro" id="IPR045864">
    <property type="entry name" value="aa-tRNA-synth_II/BPL/LPL"/>
</dbReference>
<dbReference type="InterPro" id="IPR004154">
    <property type="entry name" value="Anticodon-bd"/>
</dbReference>
<dbReference type="InterPro" id="IPR036621">
    <property type="entry name" value="Anticodon-bd_dom_sf"/>
</dbReference>
<dbReference type="InterPro" id="IPR002316">
    <property type="entry name" value="Pro-tRNA-ligase_IIa"/>
</dbReference>
<dbReference type="InterPro" id="IPR004500">
    <property type="entry name" value="Pro-tRNA-synth_IIa_bac-type"/>
</dbReference>
<dbReference type="InterPro" id="IPR023717">
    <property type="entry name" value="Pro-tRNA-Synthase_IIa_type1"/>
</dbReference>
<dbReference type="InterPro" id="IPR050062">
    <property type="entry name" value="Pro-tRNA_synthetase"/>
</dbReference>
<dbReference type="InterPro" id="IPR044140">
    <property type="entry name" value="ProRS_anticodon_short"/>
</dbReference>
<dbReference type="InterPro" id="IPR033730">
    <property type="entry name" value="ProRS_core_prok"/>
</dbReference>
<dbReference type="InterPro" id="IPR036754">
    <property type="entry name" value="YbaK/aa-tRNA-synt-asso_dom_sf"/>
</dbReference>
<dbReference type="InterPro" id="IPR007214">
    <property type="entry name" value="YbaK/aa-tRNA-synth-assoc-dom"/>
</dbReference>
<dbReference type="NCBIfam" id="NF006625">
    <property type="entry name" value="PRK09194.1"/>
    <property type="match status" value="1"/>
</dbReference>
<dbReference type="NCBIfam" id="TIGR00409">
    <property type="entry name" value="proS_fam_II"/>
    <property type="match status" value="1"/>
</dbReference>
<dbReference type="PANTHER" id="PTHR42753">
    <property type="entry name" value="MITOCHONDRIAL RIBOSOME PROTEIN L39/PROLYL-TRNA LIGASE FAMILY MEMBER"/>
    <property type="match status" value="1"/>
</dbReference>
<dbReference type="PANTHER" id="PTHR42753:SF2">
    <property type="entry name" value="PROLINE--TRNA LIGASE"/>
    <property type="match status" value="1"/>
</dbReference>
<dbReference type="Pfam" id="PF03129">
    <property type="entry name" value="HGTP_anticodon"/>
    <property type="match status" value="1"/>
</dbReference>
<dbReference type="Pfam" id="PF00587">
    <property type="entry name" value="tRNA-synt_2b"/>
    <property type="match status" value="1"/>
</dbReference>
<dbReference type="Pfam" id="PF04073">
    <property type="entry name" value="tRNA_edit"/>
    <property type="match status" value="1"/>
</dbReference>
<dbReference type="PIRSF" id="PIRSF001535">
    <property type="entry name" value="ProRS_1"/>
    <property type="match status" value="1"/>
</dbReference>
<dbReference type="PRINTS" id="PR01046">
    <property type="entry name" value="TRNASYNTHPRO"/>
</dbReference>
<dbReference type="SUPFAM" id="SSF52954">
    <property type="entry name" value="Class II aaRS ABD-related"/>
    <property type="match status" value="1"/>
</dbReference>
<dbReference type="SUPFAM" id="SSF55681">
    <property type="entry name" value="Class II aaRS and biotin synthetases"/>
    <property type="match status" value="1"/>
</dbReference>
<dbReference type="SUPFAM" id="SSF55826">
    <property type="entry name" value="YbaK/ProRS associated domain"/>
    <property type="match status" value="1"/>
</dbReference>
<dbReference type="PROSITE" id="PS50862">
    <property type="entry name" value="AA_TRNA_LIGASE_II"/>
    <property type="match status" value="1"/>
</dbReference>
<feature type="chain" id="PRO_1000199410" description="Proline--tRNA ligase">
    <location>
        <begin position="1"/>
        <end position="571"/>
    </location>
</feature>
<name>SYP_PROMH</name>
<accession>B4F249</accession>
<organism>
    <name type="scientific">Proteus mirabilis (strain HI4320)</name>
    <dbReference type="NCBI Taxonomy" id="529507"/>
    <lineage>
        <taxon>Bacteria</taxon>
        <taxon>Pseudomonadati</taxon>
        <taxon>Pseudomonadota</taxon>
        <taxon>Gammaproteobacteria</taxon>
        <taxon>Enterobacterales</taxon>
        <taxon>Morganellaceae</taxon>
        <taxon>Proteus</taxon>
    </lineage>
</organism>
<keyword id="KW-0030">Aminoacyl-tRNA synthetase</keyword>
<keyword id="KW-0067">ATP-binding</keyword>
<keyword id="KW-0963">Cytoplasm</keyword>
<keyword id="KW-0436">Ligase</keyword>
<keyword id="KW-0547">Nucleotide-binding</keyword>
<keyword id="KW-0648">Protein biosynthesis</keyword>
<keyword id="KW-1185">Reference proteome</keyword>
<comment type="function">
    <text evidence="1">Catalyzes the attachment of proline to tRNA(Pro) in a two-step reaction: proline is first activated by ATP to form Pro-AMP and then transferred to the acceptor end of tRNA(Pro). As ProRS can inadvertently accommodate and process non-cognate amino acids such as alanine and cysteine, to avoid such errors it has two additional distinct editing activities against alanine. One activity is designated as 'pretransfer' editing and involves the tRNA(Pro)-independent hydrolysis of activated Ala-AMP. The other activity is designated 'posttransfer' editing and involves deacylation of mischarged Ala-tRNA(Pro). The misacylated Cys-tRNA(Pro) is not edited by ProRS.</text>
</comment>
<comment type="catalytic activity">
    <reaction evidence="1">
        <text>tRNA(Pro) + L-proline + ATP = L-prolyl-tRNA(Pro) + AMP + diphosphate</text>
        <dbReference type="Rhea" id="RHEA:14305"/>
        <dbReference type="Rhea" id="RHEA-COMP:9700"/>
        <dbReference type="Rhea" id="RHEA-COMP:9702"/>
        <dbReference type="ChEBI" id="CHEBI:30616"/>
        <dbReference type="ChEBI" id="CHEBI:33019"/>
        <dbReference type="ChEBI" id="CHEBI:60039"/>
        <dbReference type="ChEBI" id="CHEBI:78442"/>
        <dbReference type="ChEBI" id="CHEBI:78532"/>
        <dbReference type="ChEBI" id="CHEBI:456215"/>
        <dbReference type="EC" id="6.1.1.15"/>
    </reaction>
</comment>
<comment type="subunit">
    <text evidence="1">Homodimer.</text>
</comment>
<comment type="subcellular location">
    <subcellularLocation>
        <location evidence="1">Cytoplasm</location>
    </subcellularLocation>
</comment>
<comment type="domain">
    <text evidence="1">Consists of three domains: the N-terminal catalytic domain, the editing domain and the C-terminal anticodon-binding domain.</text>
</comment>
<comment type="similarity">
    <text evidence="1">Belongs to the class-II aminoacyl-tRNA synthetase family. ProS type 1 subfamily.</text>
</comment>
<sequence length="571" mass="63879">MRTSHYLLSTLKETPADAEIVSHQLMLRAGMIRKLASGLYDWMPTGVRVLRKIEKIVREEMDNAGSLEISMPVVQPADLWQESGRWEQYGPELLRFTDRGERPFVLGPTHEEVVTDIVRNEITSYKQLPLNLYQIQTKFRDEVRPRFGVMRSREFIMKDAYSFHISQESLQETYDRMYQAYSNIFTRIGLDFRPVLADTGSIGGSASHEFQVLADSGEDDIVFSTASDYAANIELAEAVMPATPRSPATEELRLVDTPNAKTIAELVEQFNLPIEKTVKTLIVHATEESGHKLVALLVRGDHELNEIKAEKCSIVASPLVFATEEEIRQAVNAGPGSLGPINLPLPIIIDRAVSVMSDFGAGANIDGKHYFGINWERDLPLAEMADIRNVVEGDPSPDGKGTLLIKRGIEVGHIFQLGKKYSEALKATVQNEEGHNQVVTMGCYGIGITRIVAAAIEQNHDARGIIWPDAIAPFQVAILPMNMHRSYRVKEVAEKLYADLRAQGIDVLFDDRKERPGVMFADMELIGVPHTIVIGDRNLDNEQVEYKARRSDDKSLVNVNDVVAFIKEQLV</sequence>
<gene>
    <name evidence="1" type="primary">proS</name>
    <name type="ordered locus">PMI2264</name>
</gene>
<protein>
    <recommendedName>
        <fullName evidence="1">Proline--tRNA ligase</fullName>
        <ecNumber evidence="1">6.1.1.15</ecNumber>
    </recommendedName>
    <alternativeName>
        <fullName evidence="1">Prolyl-tRNA synthetase</fullName>
        <shortName evidence="1">ProRS</shortName>
    </alternativeName>
</protein>
<evidence type="ECO:0000255" key="1">
    <source>
        <dbReference type="HAMAP-Rule" id="MF_01569"/>
    </source>
</evidence>